<sequence length="139" mass="15257">MKDGMRVGERFTHDFVVPPHKTVRHLYPESPEFAEFPEVFATGFMVGLMEWACVRAMAPYLEPGEGSLGTAICVTHTAATPPGLTVTVTAELRSVEGRRLSWRVSAHDGVDEIGSGTHERAVIHLEKFNAKVRQKTPAG</sequence>
<evidence type="ECO:0000269" key="1">
    <source>
    </source>
</evidence>
<evidence type="ECO:0000269" key="2">
    <source>
    </source>
</evidence>
<evidence type="ECO:0000269" key="3">
    <source>
    </source>
</evidence>
<evidence type="ECO:0007829" key="4">
    <source>
        <dbReference type="PDB" id="3KUV"/>
    </source>
</evidence>
<evidence type="ECO:0007829" key="5">
    <source>
        <dbReference type="PDB" id="3KX7"/>
    </source>
</evidence>
<organism>
    <name type="scientific">Streptantibioticus cattleyicolor</name>
    <name type="common">Streptomyces cattleya</name>
    <dbReference type="NCBI Taxonomy" id="29303"/>
    <lineage>
        <taxon>Bacteria</taxon>
        <taxon>Bacillati</taxon>
        <taxon>Actinomycetota</taxon>
        <taxon>Actinomycetes</taxon>
        <taxon>Kitasatosporales</taxon>
        <taxon>Streptomycetaceae</taxon>
        <taxon>Streptantibioticus</taxon>
    </lineage>
</organism>
<comment type="function">
    <text evidence="1 3">Hydrolyzes fluoroacetyl-CoA before it can react with citrate synthase, and thus confers fluoroacetate resistance. Cannot use acetyl-CoA as substrate.</text>
</comment>
<comment type="catalytic activity">
    <reaction evidence="1 3">
        <text>fluoroacetyl-CoA + H2O = fluoroacetate + CoA + H(+)</text>
        <dbReference type="Rhea" id="RHEA:28542"/>
        <dbReference type="ChEBI" id="CHEBI:15377"/>
        <dbReference type="ChEBI" id="CHEBI:15378"/>
        <dbReference type="ChEBI" id="CHEBI:18172"/>
        <dbReference type="ChEBI" id="CHEBI:57287"/>
        <dbReference type="ChEBI" id="CHEBI:61623"/>
        <dbReference type="EC" id="3.1.2.29"/>
    </reaction>
</comment>
<comment type="biophysicochemical properties">
    <kinetics>
        <KM evidence="1 2">30 uM for fluoroacetyl-CoA (at pH 8 and 25 degrees Celsius)</KM>
        <KM evidence="3">8 uM for fluoroacetyl-CoA (at pH 7.6 and 25 degrees Celsius)</KM>
        <KM evidence="3">2.1 mM for acetyl-CoA (at pH 7.6 and 25 degrees Celsius)</KM>
        <Vmax evidence="1">15.0 umol/min/mg enzyme with fluoroacetyl-CoA as substrate (at pH 8 and 25 degrees Celsius)</Vmax>
        <text evidence="2">kcat is 390 sec(-1) with fluoroacetyl-CoA as substrate and 0.06 sec(-1) with acetyl-CoA (at pH 7.6 and 25 degrees Celsius, PubMed:20836570). kcat is 0.044 sec(-1) with fluoroacetyl-CoA as substrate (PubMed:20430898).</text>
    </kinetics>
</comment>
<comment type="subunit">
    <text evidence="2 3">Homodimer.</text>
</comment>
<proteinExistence type="evidence at protein level"/>
<gene>
    <name type="primary">flK</name>
</gene>
<feature type="chain" id="PRO_0000419130" description="Fluoroacetyl-CoA thioesterase">
    <location>
        <begin position="1"/>
        <end position="139"/>
    </location>
</feature>
<feature type="active site">
    <location>
        <position position="42"/>
    </location>
</feature>
<feature type="active site">
    <location>
        <position position="50"/>
    </location>
</feature>
<feature type="active site">
    <location>
        <position position="76"/>
    </location>
</feature>
<feature type="binding site">
    <location>
        <begin position="40"/>
        <end position="50"/>
    </location>
    <ligand>
        <name>substrate</name>
    </ligand>
</feature>
<feature type="binding site" evidence="2 3">
    <location>
        <position position="69"/>
    </location>
    <ligand>
        <name>CoA</name>
        <dbReference type="ChEBI" id="CHEBI:57287"/>
    </ligand>
</feature>
<feature type="binding site" evidence="2 3">
    <location>
        <position position="69"/>
    </location>
    <ligand>
        <name>substrate</name>
    </ligand>
</feature>
<feature type="binding site">
    <location>
        <begin position="76"/>
        <end position="77"/>
    </location>
    <ligand>
        <name>CoA</name>
        <dbReference type="ChEBI" id="CHEBI:57287"/>
    </ligand>
</feature>
<feature type="binding site" evidence="2 3">
    <location>
        <position position="120"/>
    </location>
    <ligand>
        <name>substrate</name>
    </ligand>
</feature>
<feature type="mutagenesis site" description="Reduced activity." evidence="3">
    <original>V</original>
    <variation>A</variation>
    <location>
        <position position="23"/>
    </location>
</feature>
<feature type="mutagenesis site" description="Reduced activity." evidence="3">
    <original>L</original>
    <variation>A</variation>
    <location>
        <position position="26"/>
    </location>
</feature>
<feature type="mutagenesis site" description="Reduced activity." evidence="3">
    <original>F</original>
    <variation>A</variation>
    <location>
        <position position="33"/>
    </location>
</feature>
<feature type="mutagenesis site" description="Reduced activity." evidence="3">
    <original>F</original>
    <variation>A</variation>
    <location>
        <position position="36"/>
    </location>
</feature>
<feature type="mutagenesis site" description="Reduced activity." evidence="2 3">
    <original>T</original>
    <variation>A</variation>
    <location>
        <position position="42"/>
    </location>
</feature>
<feature type="mutagenesis site" description="Enhancement of acetyl-CoA binding, but reduced activity toward fluoroacetyl-CoA." evidence="2 3">
    <original>T</original>
    <variation>C</variation>
    <variation>S</variation>
    <location>
        <position position="42"/>
    </location>
</feature>
<feature type="mutagenesis site" description="Reduced activity and affinity." evidence="2 3">
    <original>E</original>
    <variation>A</variation>
    <variation>Q</variation>
    <location>
        <position position="50"/>
    </location>
</feature>
<feature type="mutagenesis site" description="Reduced activity." evidence="2 3">
    <original>H</original>
    <variation>A</variation>
    <location>
        <position position="76"/>
    </location>
</feature>
<feature type="strand" evidence="4">
    <location>
        <begin position="10"/>
        <end position="16"/>
    </location>
</feature>
<feature type="helix" evidence="4">
    <location>
        <begin position="19"/>
        <end position="21"/>
    </location>
</feature>
<feature type="helix" evidence="4">
    <location>
        <begin position="23"/>
        <end position="26"/>
    </location>
</feature>
<feature type="helix" evidence="4">
    <location>
        <begin position="31"/>
        <end position="33"/>
    </location>
</feature>
<feature type="strand" evidence="5">
    <location>
        <begin position="38"/>
        <end position="40"/>
    </location>
</feature>
<feature type="helix" evidence="4">
    <location>
        <begin position="42"/>
        <end position="56"/>
    </location>
</feature>
<feature type="helix" evidence="4">
    <location>
        <begin position="58"/>
        <end position="60"/>
    </location>
</feature>
<feature type="strand" evidence="4">
    <location>
        <begin position="65"/>
        <end position="75"/>
    </location>
</feature>
<feature type="strand" evidence="4">
    <location>
        <begin position="84"/>
        <end position="96"/>
    </location>
</feature>
<feature type="strand" evidence="4">
    <location>
        <begin position="99"/>
        <end position="107"/>
    </location>
</feature>
<feature type="strand" evidence="4">
    <location>
        <begin position="109"/>
        <end position="124"/>
    </location>
</feature>
<feature type="helix" evidence="4">
    <location>
        <begin position="125"/>
        <end position="133"/>
    </location>
</feature>
<reference key="1">
    <citation type="journal article" date="2006" name="Chem. Biol.">
        <title>The gene cluster for fluorometabolite biosynthesis in Streptomyces cattleya: a thioesterase confers resistance to fluoroacetyl-coenzyme A.</title>
        <authorList>
            <person name="Huang F."/>
            <person name="Haydock S.F."/>
            <person name="Spiteller D."/>
            <person name="Mironenko T."/>
            <person name="Li T.-L."/>
            <person name="O'Hagan D."/>
            <person name="Leadlay P.F."/>
            <person name="Spencer J.B."/>
        </authorList>
    </citation>
    <scope>NUCLEOTIDE SEQUENCE [GENOMIC DNA]</scope>
    <scope>FUNCTION</scope>
    <scope>CATALYTIC ACTIVITY</scope>
    <scope>BIOPHYSICOCHEMICAL PROPERTIES</scope>
</reference>
<reference key="2">
    <citation type="journal article" date="2010" name="Biochemistry">
        <title>Structural and biochemical studies of a fluoroacetyl-CoA-specific thioesterase reveal a molecular basis for fluorine selectivity.</title>
        <authorList>
            <person name="Weeks A.M."/>
            <person name="Coyle S.M."/>
            <person name="Jinek M."/>
            <person name="Doudna J.A."/>
            <person name="Chang M.C.Y."/>
        </authorList>
    </citation>
    <scope>X-RAY CRYSTALLOGRAPHY (1.85 ANGSTROMS) IN COMPLEX WITH COENZYME A AND SUBSTRATE</scope>
    <scope>FUNCTION</scope>
    <scope>CATALYTIC ACTIVITY</scope>
    <scope>MUTAGENESIS OF VAL-23; LEU-26; PHE-33; PHE-36; THR-42; GLU-50 AND HIS-76</scope>
    <scope>SUBUNIT</scope>
    <scope>BIOPHYSICOCHEMICAL PROPERTIES</scope>
</reference>
<reference key="3">
    <citation type="journal article" date="2010" name="J. Biol. Chem.">
        <title>Structural basis for the activity and substrate specificity of fluoroacetyl-CoA thioesterase FlK.</title>
        <authorList>
            <person name="Dias M.V.B."/>
            <person name="Huang F."/>
            <person name="Chirgadze D.Y."/>
            <person name="Tosin M."/>
            <person name="Spiteller D."/>
            <person name="Dry E.F.V."/>
            <person name="Leadlay P.F."/>
            <person name="Spencer J.B."/>
            <person name="Blundell T.L."/>
        </authorList>
    </citation>
    <scope>X-RAY CRYSTALLOGRAPHY (1.50 ANGSTROMS) IN COMPLEX WITH COENZYME A AND SUBSTRATE</scope>
    <scope>SUBUNIT</scope>
    <scope>BIOPHYSICOCHEMICAL PROPERTIES</scope>
    <scope>MUTAGENESIS OF THR-42; GLU-50 AND HIS-76</scope>
</reference>
<dbReference type="EC" id="3.1.2.29"/>
<dbReference type="EMBL" id="AM055586">
    <property type="protein sequence ID" value="CAJ20012.1"/>
    <property type="molecule type" value="Genomic_DNA"/>
</dbReference>
<dbReference type="PDB" id="3KUV">
    <property type="method" value="X-ray"/>
    <property type="resolution" value="1.50 A"/>
    <property type="chains" value="A/B=1-139"/>
</dbReference>
<dbReference type="PDB" id="3KUW">
    <property type="method" value="X-ray"/>
    <property type="resolution" value="1.90 A"/>
    <property type="chains" value="A/B=1-139"/>
</dbReference>
<dbReference type="PDB" id="3KV7">
    <property type="method" value="X-ray"/>
    <property type="resolution" value="1.56 A"/>
    <property type="chains" value="A/B=1-139"/>
</dbReference>
<dbReference type="PDB" id="3KV8">
    <property type="method" value="X-ray"/>
    <property type="resolution" value="1.85 A"/>
    <property type="chains" value="A/B=1-139"/>
</dbReference>
<dbReference type="PDB" id="3KVI">
    <property type="method" value="X-ray"/>
    <property type="resolution" value="1.76 A"/>
    <property type="chains" value="A/B=1-139"/>
</dbReference>
<dbReference type="PDB" id="3KVU">
    <property type="method" value="X-ray"/>
    <property type="resolution" value="2.00 A"/>
    <property type="chains" value="A/B/C/D=1-139"/>
</dbReference>
<dbReference type="PDB" id="3KVZ">
    <property type="method" value="X-ray"/>
    <property type="resolution" value="2.10 A"/>
    <property type="chains" value="A/B/C/D/E/F/G/H=1-139"/>
</dbReference>
<dbReference type="PDB" id="3KW1">
    <property type="method" value="X-ray"/>
    <property type="resolution" value="1.90 A"/>
    <property type="chains" value="A/B/C/D/E/F/G/H=1-139"/>
</dbReference>
<dbReference type="PDB" id="3KX7">
    <property type="method" value="X-ray"/>
    <property type="resolution" value="1.70 A"/>
    <property type="chains" value="A/B=1-139"/>
</dbReference>
<dbReference type="PDB" id="3KX8">
    <property type="method" value="X-ray"/>
    <property type="resolution" value="2.35 A"/>
    <property type="chains" value="A/B/C/D/E/F/G/H=1-139"/>
</dbReference>
<dbReference type="PDB" id="3P2Q">
    <property type="method" value="X-ray"/>
    <property type="resolution" value="1.85 A"/>
    <property type="chains" value="A/B=1-139"/>
</dbReference>
<dbReference type="PDB" id="3P2R">
    <property type="method" value="X-ray"/>
    <property type="resolution" value="2.46 A"/>
    <property type="chains" value="A/B=1-139"/>
</dbReference>
<dbReference type="PDB" id="3P2S">
    <property type="method" value="X-ray"/>
    <property type="resolution" value="1.95 A"/>
    <property type="chains" value="A/B=1-139"/>
</dbReference>
<dbReference type="PDB" id="3P3F">
    <property type="method" value="X-ray"/>
    <property type="resolution" value="2.30 A"/>
    <property type="chains" value="A/B/C/D/E/F=1-139"/>
</dbReference>
<dbReference type="PDB" id="3P3I">
    <property type="method" value="X-ray"/>
    <property type="resolution" value="2.00 A"/>
    <property type="chains" value="A/B/C/D/E/F=1-139"/>
</dbReference>
<dbReference type="PDBsum" id="3KUV"/>
<dbReference type="PDBsum" id="3KUW"/>
<dbReference type="PDBsum" id="3KV7"/>
<dbReference type="PDBsum" id="3KV8"/>
<dbReference type="PDBsum" id="3KVI"/>
<dbReference type="PDBsum" id="3KVU"/>
<dbReference type="PDBsum" id="3KVZ"/>
<dbReference type="PDBsum" id="3KW1"/>
<dbReference type="PDBsum" id="3KX7"/>
<dbReference type="PDBsum" id="3KX8"/>
<dbReference type="PDBsum" id="3P2Q"/>
<dbReference type="PDBsum" id="3P2R"/>
<dbReference type="PDBsum" id="3P2S"/>
<dbReference type="PDBsum" id="3P3F"/>
<dbReference type="PDBsum" id="3P3I"/>
<dbReference type="SMR" id="Q1EMV2"/>
<dbReference type="OMA" id="KIGEGIH"/>
<dbReference type="BioCyc" id="MetaCyc:MONOMER-15928"/>
<dbReference type="BRENDA" id="3.1.2.29">
    <property type="organism ID" value="5990"/>
</dbReference>
<dbReference type="EvolutionaryTrace" id="Q1EMV2"/>
<dbReference type="GO" id="GO:0016289">
    <property type="term" value="F:acyl-CoA hydrolase activity"/>
    <property type="evidence" value="ECO:0000314"/>
    <property type="project" value="UniProtKB"/>
</dbReference>
<dbReference type="GO" id="GO:0042803">
    <property type="term" value="F:protein homodimerization activity"/>
    <property type="evidence" value="ECO:0000314"/>
    <property type="project" value="UniProtKB"/>
</dbReference>
<dbReference type="Gene3D" id="3.10.129.10">
    <property type="entry name" value="Hotdog Thioesterase"/>
    <property type="match status" value="1"/>
</dbReference>
<dbReference type="InterPro" id="IPR025540">
    <property type="entry name" value="FlK"/>
</dbReference>
<dbReference type="InterPro" id="IPR054485">
    <property type="entry name" value="FlK-like_dom"/>
</dbReference>
<dbReference type="InterPro" id="IPR029069">
    <property type="entry name" value="HotDog_dom_sf"/>
</dbReference>
<dbReference type="PANTHER" id="PTHR36934">
    <property type="entry name" value="BLR0278 PROTEIN"/>
    <property type="match status" value="1"/>
</dbReference>
<dbReference type="PANTHER" id="PTHR36934:SF1">
    <property type="entry name" value="THIOESTERASE DOMAIN-CONTAINING PROTEIN"/>
    <property type="match status" value="1"/>
</dbReference>
<dbReference type="Pfam" id="PF22636">
    <property type="entry name" value="FlK"/>
    <property type="match status" value="1"/>
</dbReference>
<dbReference type="PIRSF" id="PIRSF014972">
    <property type="entry name" value="FlK"/>
    <property type="match status" value="1"/>
</dbReference>
<dbReference type="SUPFAM" id="SSF54637">
    <property type="entry name" value="Thioesterase/thiol ester dehydrase-isomerase"/>
    <property type="match status" value="1"/>
</dbReference>
<protein>
    <recommendedName>
        <fullName>Fluoroacetyl-CoA thioesterase</fullName>
        <ecNumber>3.1.2.29</ecNumber>
    </recommendedName>
</protein>
<accession>Q1EMV2</accession>
<name>FLK_STRCT</name>
<keyword id="KW-0002">3D-structure</keyword>
<keyword id="KW-0378">Hydrolase</keyword>